<protein>
    <recommendedName>
        <fullName evidence="1">Chorismate synthase</fullName>
        <shortName evidence="1">CS</shortName>
        <ecNumber evidence="1">4.2.3.5</ecNumber>
    </recommendedName>
    <alternativeName>
        <fullName evidence="1">5-enolpyruvylshikimate-3-phosphate phospholyase</fullName>
    </alternativeName>
</protein>
<evidence type="ECO:0000255" key="1">
    <source>
        <dbReference type="HAMAP-Rule" id="MF_00300"/>
    </source>
</evidence>
<organism>
    <name type="scientific">Staphylococcus aureus (strain MW2)</name>
    <dbReference type="NCBI Taxonomy" id="196620"/>
    <lineage>
        <taxon>Bacteria</taxon>
        <taxon>Bacillati</taxon>
        <taxon>Bacillota</taxon>
        <taxon>Bacilli</taxon>
        <taxon>Bacillales</taxon>
        <taxon>Staphylococcaceae</taxon>
        <taxon>Staphylococcus</taxon>
    </lineage>
</organism>
<gene>
    <name evidence="1" type="primary">aroC</name>
    <name type="ordered locus">MW1356</name>
</gene>
<accession>Q8NWN3</accession>
<comment type="function">
    <text evidence="1">Catalyzes the anti-1,4-elimination of the C-3 phosphate and the C-6 proR hydrogen from 5-enolpyruvylshikimate-3-phosphate (EPSP) to yield chorismate, which is the branch point compound that serves as the starting substrate for the three terminal pathways of aromatic amino acid biosynthesis. This reaction introduces a second double bond into the aromatic ring system.</text>
</comment>
<comment type="catalytic activity">
    <reaction evidence="1">
        <text>5-O-(1-carboxyvinyl)-3-phosphoshikimate = chorismate + phosphate</text>
        <dbReference type="Rhea" id="RHEA:21020"/>
        <dbReference type="ChEBI" id="CHEBI:29748"/>
        <dbReference type="ChEBI" id="CHEBI:43474"/>
        <dbReference type="ChEBI" id="CHEBI:57701"/>
        <dbReference type="EC" id="4.2.3.5"/>
    </reaction>
</comment>
<comment type="cofactor">
    <cofactor evidence="1">
        <name>FMNH2</name>
        <dbReference type="ChEBI" id="CHEBI:57618"/>
    </cofactor>
    <text evidence="1">Reduced FMN (FMNH(2)).</text>
</comment>
<comment type="pathway">
    <text evidence="1">Metabolic intermediate biosynthesis; chorismate biosynthesis; chorismate from D-erythrose 4-phosphate and phosphoenolpyruvate: step 7/7.</text>
</comment>
<comment type="subunit">
    <text evidence="1">Homotetramer.</text>
</comment>
<comment type="similarity">
    <text evidence="1">Belongs to the chorismate synthase family.</text>
</comment>
<name>AROC_STAAW</name>
<feature type="chain" id="PRO_0000140647" description="Chorismate synthase">
    <location>
        <begin position="1"/>
        <end position="388"/>
    </location>
</feature>
<feature type="binding site" evidence="1">
    <location>
        <position position="39"/>
    </location>
    <ligand>
        <name>NADP(+)</name>
        <dbReference type="ChEBI" id="CHEBI:58349"/>
    </ligand>
</feature>
<feature type="binding site" evidence="1">
    <location>
        <position position="45"/>
    </location>
    <ligand>
        <name>NADP(+)</name>
        <dbReference type="ChEBI" id="CHEBI:58349"/>
    </ligand>
</feature>
<feature type="binding site" evidence="1">
    <location>
        <begin position="132"/>
        <end position="134"/>
    </location>
    <ligand>
        <name>FMN</name>
        <dbReference type="ChEBI" id="CHEBI:58210"/>
    </ligand>
</feature>
<feature type="binding site" evidence="1">
    <location>
        <begin position="251"/>
        <end position="252"/>
    </location>
    <ligand>
        <name>FMN</name>
        <dbReference type="ChEBI" id="CHEBI:58210"/>
    </ligand>
</feature>
<feature type="binding site" evidence="1">
    <location>
        <position position="296"/>
    </location>
    <ligand>
        <name>FMN</name>
        <dbReference type="ChEBI" id="CHEBI:58210"/>
    </ligand>
</feature>
<feature type="binding site" evidence="1">
    <location>
        <begin position="311"/>
        <end position="315"/>
    </location>
    <ligand>
        <name>FMN</name>
        <dbReference type="ChEBI" id="CHEBI:58210"/>
    </ligand>
</feature>
<feature type="binding site" evidence="1">
    <location>
        <position position="337"/>
    </location>
    <ligand>
        <name>FMN</name>
        <dbReference type="ChEBI" id="CHEBI:58210"/>
    </ligand>
</feature>
<sequence>MRYLTSGESHGPQLTVIVEGIPANLEIKVEDINKEMFKRQGGYGRGRRMQIEKDTVEIVSGVRNGYTLGSPITMVVTNDDFTHWRKIMGAAPISEEERENMKRTITKPRPGHADLVGGMKYNHRDLRNVLERSSARETAARVAVGALCKVLLQQLDIDIYSRVVEIGGIKDKDFYDSKTFKANLDRNDVRVIDDSIAQAMRDKIDEAKNDGDSIGGVVQVVVENMPVGVGSYVHYDRKLDGRIAQGVVSINAFKGVSFGEGFKAAEKPGSEIQDEILYNTELGYYRGSNHLGGLEGGMSNGMPIIVNGVMKPIPTLYKPLNSVDINTKEDFKATIERSDSCAVPAASIVCEHVVAFEIAKALLEEFQSNHIEQLKQQIIERRQLNIEF</sequence>
<proteinExistence type="inferred from homology"/>
<keyword id="KW-0028">Amino-acid biosynthesis</keyword>
<keyword id="KW-0057">Aromatic amino acid biosynthesis</keyword>
<keyword id="KW-0274">FAD</keyword>
<keyword id="KW-0285">Flavoprotein</keyword>
<keyword id="KW-0288">FMN</keyword>
<keyword id="KW-0456">Lyase</keyword>
<keyword id="KW-0521">NADP</keyword>
<reference key="1">
    <citation type="journal article" date="2002" name="Lancet">
        <title>Genome and virulence determinants of high virulence community-acquired MRSA.</title>
        <authorList>
            <person name="Baba T."/>
            <person name="Takeuchi F."/>
            <person name="Kuroda M."/>
            <person name="Yuzawa H."/>
            <person name="Aoki K."/>
            <person name="Oguchi A."/>
            <person name="Nagai Y."/>
            <person name="Iwama N."/>
            <person name="Asano K."/>
            <person name="Naimi T."/>
            <person name="Kuroda H."/>
            <person name="Cui L."/>
            <person name="Yamamoto K."/>
            <person name="Hiramatsu K."/>
        </authorList>
    </citation>
    <scope>NUCLEOTIDE SEQUENCE [LARGE SCALE GENOMIC DNA]</scope>
    <source>
        <strain>MW2</strain>
    </source>
</reference>
<dbReference type="EC" id="4.2.3.5" evidence="1"/>
<dbReference type="EMBL" id="BA000033">
    <property type="protein sequence ID" value="BAB95221.1"/>
    <property type="molecule type" value="Genomic_DNA"/>
</dbReference>
<dbReference type="RefSeq" id="WP_001269923.1">
    <property type="nucleotide sequence ID" value="NC_003923.1"/>
</dbReference>
<dbReference type="SMR" id="Q8NWN3"/>
<dbReference type="KEGG" id="sam:MW1356"/>
<dbReference type="HOGENOM" id="CLU_034547_2_0_9"/>
<dbReference type="UniPathway" id="UPA00053">
    <property type="reaction ID" value="UER00090"/>
</dbReference>
<dbReference type="GO" id="GO:0005829">
    <property type="term" value="C:cytosol"/>
    <property type="evidence" value="ECO:0007669"/>
    <property type="project" value="TreeGrafter"/>
</dbReference>
<dbReference type="GO" id="GO:0004107">
    <property type="term" value="F:chorismate synthase activity"/>
    <property type="evidence" value="ECO:0007669"/>
    <property type="project" value="UniProtKB-UniRule"/>
</dbReference>
<dbReference type="GO" id="GO:0010181">
    <property type="term" value="F:FMN binding"/>
    <property type="evidence" value="ECO:0007669"/>
    <property type="project" value="TreeGrafter"/>
</dbReference>
<dbReference type="GO" id="GO:0008652">
    <property type="term" value="P:amino acid biosynthetic process"/>
    <property type="evidence" value="ECO:0007669"/>
    <property type="project" value="UniProtKB-KW"/>
</dbReference>
<dbReference type="GO" id="GO:0009073">
    <property type="term" value="P:aromatic amino acid family biosynthetic process"/>
    <property type="evidence" value="ECO:0007669"/>
    <property type="project" value="UniProtKB-KW"/>
</dbReference>
<dbReference type="GO" id="GO:0009423">
    <property type="term" value="P:chorismate biosynthetic process"/>
    <property type="evidence" value="ECO:0007669"/>
    <property type="project" value="UniProtKB-UniRule"/>
</dbReference>
<dbReference type="CDD" id="cd07304">
    <property type="entry name" value="Chorismate_synthase"/>
    <property type="match status" value="1"/>
</dbReference>
<dbReference type="FunFam" id="3.60.150.10:FF:000002">
    <property type="entry name" value="Chorismate synthase"/>
    <property type="match status" value="1"/>
</dbReference>
<dbReference type="Gene3D" id="3.60.150.10">
    <property type="entry name" value="Chorismate synthase AroC"/>
    <property type="match status" value="1"/>
</dbReference>
<dbReference type="HAMAP" id="MF_00300">
    <property type="entry name" value="Chorismate_synth"/>
    <property type="match status" value="1"/>
</dbReference>
<dbReference type="InterPro" id="IPR000453">
    <property type="entry name" value="Chorismate_synth"/>
</dbReference>
<dbReference type="InterPro" id="IPR035904">
    <property type="entry name" value="Chorismate_synth_AroC_sf"/>
</dbReference>
<dbReference type="InterPro" id="IPR020541">
    <property type="entry name" value="Chorismate_synthase_CS"/>
</dbReference>
<dbReference type="NCBIfam" id="TIGR00033">
    <property type="entry name" value="aroC"/>
    <property type="match status" value="1"/>
</dbReference>
<dbReference type="NCBIfam" id="NF003793">
    <property type="entry name" value="PRK05382.1"/>
    <property type="match status" value="1"/>
</dbReference>
<dbReference type="PANTHER" id="PTHR21085">
    <property type="entry name" value="CHORISMATE SYNTHASE"/>
    <property type="match status" value="1"/>
</dbReference>
<dbReference type="PANTHER" id="PTHR21085:SF0">
    <property type="entry name" value="CHORISMATE SYNTHASE"/>
    <property type="match status" value="1"/>
</dbReference>
<dbReference type="Pfam" id="PF01264">
    <property type="entry name" value="Chorismate_synt"/>
    <property type="match status" value="1"/>
</dbReference>
<dbReference type="PIRSF" id="PIRSF001456">
    <property type="entry name" value="Chorismate_synth"/>
    <property type="match status" value="1"/>
</dbReference>
<dbReference type="SUPFAM" id="SSF103263">
    <property type="entry name" value="Chorismate synthase, AroC"/>
    <property type="match status" value="1"/>
</dbReference>
<dbReference type="PROSITE" id="PS00787">
    <property type="entry name" value="CHORISMATE_SYNTHASE_1"/>
    <property type="match status" value="1"/>
</dbReference>
<dbReference type="PROSITE" id="PS00788">
    <property type="entry name" value="CHORISMATE_SYNTHASE_2"/>
    <property type="match status" value="1"/>
</dbReference>
<dbReference type="PROSITE" id="PS00789">
    <property type="entry name" value="CHORISMATE_SYNTHASE_3"/>
    <property type="match status" value="1"/>
</dbReference>